<accession>Q03N03</accession>
<feature type="chain" id="PRO_1000001850" description="Phosphate acyltransferase">
    <location>
        <begin position="1"/>
        <end position="334"/>
    </location>
</feature>
<gene>
    <name evidence="1" type="primary">plsX</name>
    <name type="ordered locus">STER_0047</name>
</gene>
<comment type="function">
    <text evidence="1">Catalyzes the reversible formation of acyl-phosphate (acyl-PO(4)) from acyl-[acyl-carrier-protein] (acyl-ACP). This enzyme utilizes acyl-ACP as fatty acyl donor, but not acyl-CoA.</text>
</comment>
<comment type="catalytic activity">
    <reaction evidence="1">
        <text>a fatty acyl-[ACP] + phosphate = an acyl phosphate + holo-[ACP]</text>
        <dbReference type="Rhea" id="RHEA:42292"/>
        <dbReference type="Rhea" id="RHEA-COMP:9685"/>
        <dbReference type="Rhea" id="RHEA-COMP:14125"/>
        <dbReference type="ChEBI" id="CHEBI:43474"/>
        <dbReference type="ChEBI" id="CHEBI:59918"/>
        <dbReference type="ChEBI" id="CHEBI:64479"/>
        <dbReference type="ChEBI" id="CHEBI:138651"/>
        <dbReference type="EC" id="2.3.1.274"/>
    </reaction>
</comment>
<comment type="pathway">
    <text evidence="1">Lipid metabolism; phospholipid metabolism.</text>
</comment>
<comment type="subunit">
    <text evidence="1">Homodimer. Probably interacts with PlsY.</text>
</comment>
<comment type="subcellular location">
    <subcellularLocation>
        <location evidence="1">Cytoplasm</location>
    </subcellularLocation>
    <text evidence="1">Associated with the membrane possibly through PlsY.</text>
</comment>
<comment type="similarity">
    <text evidence="1">Belongs to the PlsX family.</text>
</comment>
<reference key="1">
    <citation type="journal article" date="2006" name="Proc. Natl. Acad. Sci. U.S.A.">
        <title>Comparative genomics of the lactic acid bacteria.</title>
        <authorList>
            <person name="Makarova K.S."/>
            <person name="Slesarev A."/>
            <person name="Wolf Y.I."/>
            <person name="Sorokin A."/>
            <person name="Mirkin B."/>
            <person name="Koonin E.V."/>
            <person name="Pavlov A."/>
            <person name="Pavlova N."/>
            <person name="Karamychev V."/>
            <person name="Polouchine N."/>
            <person name="Shakhova V."/>
            <person name="Grigoriev I."/>
            <person name="Lou Y."/>
            <person name="Rohksar D."/>
            <person name="Lucas S."/>
            <person name="Huang K."/>
            <person name="Goodstein D.M."/>
            <person name="Hawkins T."/>
            <person name="Plengvidhya V."/>
            <person name="Welker D."/>
            <person name="Hughes J."/>
            <person name="Goh Y."/>
            <person name="Benson A."/>
            <person name="Baldwin K."/>
            <person name="Lee J.-H."/>
            <person name="Diaz-Muniz I."/>
            <person name="Dosti B."/>
            <person name="Smeianov V."/>
            <person name="Wechter W."/>
            <person name="Barabote R."/>
            <person name="Lorca G."/>
            <person name="Altermann E."/>
            <person name="Barrangou R."/>
            <person name="Ganesan B."/>
            <person name="Xie Y."/>
            <person name="Rawsthorne H."/>
            <person name="Tamir D."/>
            <person name="Parker C."/>
            <person name="Breidt F."/>
            <person name="Broadbent J.R."/>
            <person name="Hutkins R."/>
            <person name="O'Sullivan D."/>
            <person name="Steele J."/>
            <person name="Unlu G."/>
            <person name="Saier M.H. Jr."/>
            <person name="Klaenhammer T."/>
            <person name="Richardson P."/>
            <person name="Kozyavkin S."/>
            <person name="Weimer B.C."/>
            <person name="Mills D.A."/>
        </authorList>
    </citation>
    <scope>NUCLEOTIDE SEQUENCE [LARGE SCALE GENOMIC DNA]</scope>
    <source>
        <strain>ATCC BAA-491 / LMD-9</strain>
    </source>
</reference>
<name>PLSX_STRTD</name>
<sequence length="334" mass="35518">MHVIAVDAMGGDNAPQAIVEGVNQALAEFKDIEIQLYGDEAKIKNYLTANERVSIVHTDEKINSDDEPVKAIRKKKKASMVLGAQAVKEKAADAVISAGNTGALLAAGLFVVGRIKGVERPGLMSTMPSFTGQPFDMLDLGANAENTANHLHQYAILGSFYAKNVRGIATPRVGLLNNGTEKTKGDSLRKEAFELLSKEASINFIGNVEAREIMSGAADVVVADGFTGNAVLKAIEGTGLGTMKTLKSAIMNGGLKAKLGAFLLKDRLKGMKETMDYSSAGGAVLFGLKAPVVKCHGSSDAKAVYYTIKQVRKMLDTKVVEQLVDAFDPKEEVN</sequence>
<proteinExistence type="inferred from homology"/>
<organism>
    <name type="scientific">Streptococcus thermophilus (strain ATCC BAA-491 / LMD-9)</name>
    <dbReference type="NCBI Taxonomy" id="322159"/>
    <lineage>
        <taxon>Bacteria</taxon>
        <taxon>Bacillati</taxon>
        <taxon>Bacillota</taxon>
        <taxon>Bacilli</taxon>
        <taxon>Lactobacillales</taxon>
        <taxon>Streptococcaceae</taxon>
        <taxon>Streptococcus</taxon>
    </lineage>
</organism>
<protein>
    <recommendedName>
        <fullName evidence="1">Phosphate acyltransferase</fullName>
        <ecNumber evidence="1">2.3.1.274</ecNumber>
    </recommendedName>
    <alternativeName>
        <fullName evidence="1">Acyl-ACP phosphotransacylase</fullName>
    </alternativeName>
    <alternativeName>
        <fullName evidence="1">Acyl-[acyl-carrier-protein]--phosphate acyltransferase</fullName>
    </alternativeName>
    <alternativeName>
        <fullName evidence="1">Phosphate-acyl-ACP acyltransferase</fullName>
    </alternativeName>
</protein>
<dbReference type="EC" id="2.3.1.274" evidence="1"/>
<dbReference type="EMBL" id="CP000419">
    <property type="protein sequence ID" value="ABJ65419.1"/>
    <property type="molecule type" value="Genomic_DNA"/>
</dbReference>
<dbReference type="RefSeq" id="WP_011680588.1">
    <property type="nucleotide sequence ID" value="NC_008532.1"/>
</dbReference>
<dbReference type="SMR" id="Q03N03"/>
<dbReference type="KEGG" id="ste:STER_0047"/>
<dbReference type="HOGENOM" id="CLU_039379_1_1_9"/>
<dbReference type="UniPathway" id="UPA00085"/>
<dbReference type="GO" id="GO:0005737">
    <property type="term" value="C:cytoplasm"/>
    <property type="evidence" value="ECO:0007669"/>
    <property type="project" value="UniProtKB-SubCell"/>
</dbReference>
<dbReference type="GO" id="GO:0043811">
    <property type="term" value="F:phosphate:acyl-[acyl carrier protein] acyltransferase activity"/>
    <property type="evidence" value="ECO:0007669"/>
    <property type="project" value="UniProtKB-UniRule"/>
</dbReference>
<dbReference type="GO" id="GO:0006633">
    <property type="term" value="P:fatty acid biosynthetic process"/>
    <property type="evidence" value="ECO:0007669"/>
    <property type="project" value="UniProtKB-UniRule"/>
</dbReference>
<dbReference type="GO" id="GO:0008654">
    <property type="term" value="P:phospholipid biosynthetic process"/>
    <property type="evidence" value="ECO:0007669"/>
    <property type="project" value="UniProtKB-KW"/>
</dbReference>
<dbReference type="Gene3D" id="3.40.718.10">
    <property type="entry name" value="Isopropylmalate Dehydrogenase"/>
    <property type="match status" value="1"/>
</dbReference>
<dbReference type="HAMAP" id="MF_00019">
    <property type="entry name" value="PlsX"/>
    <property type="match status" value="1"/>
</dbReference>
<dbReference type="InterPro" id="IPR003664">
    <property type="entry name" value="FA_synthesis"/>
</dbReference>
<dbReference type="InterPro" id="IPR012281">
    <property type="entry name" value="Phospholipid_synth_PlsX-like"/>
</dbReference>
<dbReference type="NCBIfam" id="TIGR00182">
    <property type="entry name" value="plsX"/>
    <property type="match status" value="1"/>
</dbReference>
<dbReference type="PANTHER" id="PTHR30100">
    <property type="entry name" value="FATTY ACID/PHOSPHOLIPID SYNTHESIS PROTEIN PLSX"/>
    <property type="match status" value="1"/>
</dbReference>
<dbReference type="PANTHER" id="PTHR30100:SF1">
    <property type="entry name" value="PHOSPHATE ACYLTRANSFERASE"/>
    <property type="match status" value="1"/>
</dbReference>
<dbReference type="Pfam" id="PF02504">
    <property type="entry name" value="FA_synthesis"/>
    <property type="match status" value="1"/>
</dbReference>
<dbReference type="PIRSF" id="PIRSF002465">
    <property type="entry name" value="Phsphlp_syn_PlsX"/>
    <property type="match status" value="1"/>
</dbReference>
<dbReference type="SUPFAM" id="SSF53659">
    <property type="entry name" value="Isocitrate/Isopropylmalate dehydrogenase-like"/>
    <property type="match status" value="1"/>
</dbReference>
<keyword id="KW-0963">Cytoplasm</keyword>
<keyword id="KW-0444">Lipid biosynthesis</keyword>
<keyword id="KW-0443">Lipid metabolism</keyword>
<keyword id="KW-0594">Phospholipid biosynthesis</keyword>
<keyword id="KW-1208">Phospholipid metabolism</keyword>
<keyword id="KW-0808">Transferase</keyword>
<evidence type="ECO:0000255" key="1">
    <source>
        <dbReference type="HAMAP-Rule" id="MF_00019"/>
    </source>
</evidence>